<keyword id="KW-0961">Cell wall biogenesis/degradation</keyword>
<keyword id="KW-0378">Hydrolase</keyword>
<keyword id="KW-0511">Multifunctional enzyme</keyword>
<keyword id="KW-0677">Repeat</keyword>
<keyword id="KW-0964">Secreted</keyword>
<keyword id="KW-0732">Signal</keyword>
<reference key="1">
    <citation type="journal article" date="2008" name="Antimicrob. Agents Chemother.">
        <title>Mutated response regulator graR is responsible for phenotypic conversion of Staphylococcus aureus from heterogeneous vancomycin-intermediate resistance to vancomycin-intermediate resistance.</title>
        <authorList>
            <person name="Neoh H.-M."/>
            <person name="Cui L."/>
            <person name="Yuzawa H."/>
            <person name="Takeuchi F."/>
            <person name="Matsuo M."/>
            <person name="Hiramatsu K."/>
        </authorList>
    </citation>
    <scope>NUCLEOTIDE SEQUENCE [LARGE SCALE GENOMIC DNA]</scope>
    <source>
        <strain>Mu3 / ATCC 700698</strain>
    </source>
</reference>
<reference key="2">
    <citation type="submission" date="2003-06" db="EMBL/GenBank/DDBJ databases">
        <title>Genetic analysis of seventeen genes in Staphylococcus aureus with reduced susceptibility to vancomycin (VRSA) and heteroVRSA (hVRSA).</title>
        <authorList>
            <person name="Wootton M."/>
            <person name="Avison M.B."/>
            <person name="Bennett P.M."/>
            <person name="Howe R.A."/>
            <person name="MacGowan A.P."/>
            <person name="Walsh T.R."/>
        </authorList>
    </citation>
    <scope>NUCLEOTIDE SEQUENCE [GENOMIC DNA] OF 784-1255</scope>
</reference>
<dbReference type="EC" id="3.5.1.28"/>
<dbReference type="EC" id="3.2.1.96"/>
<dbReference type="EMBL" id="AP009324">
    <property type="protein sequence ID" value="BAF77928.1"/>
    <property type="status" value="ALT_INIT"/>
    <property type="molecule type" value="Genomic_DNA"/>
</dbReference>
<dbReference type="EMBL" id="AJ567417">
    <property type="protein sequence ID" value="CAD98827.1"/>
    <property type="molecule type" value="Genomic_DNA"/>
</dbReference>
<dbReference type="SMR" id="A7X0T9"/>
<dbReference type="CAZy" id="GH73">
    <property type="family name" value="Glycoside Hydrolase Family 73"/>
</dbReference>
<dbReference type="KEGG" id="saw:SAHV_1045"/>
<dbReference type="HOGENOM" id="CLU_005906_0_0_9"/>
<dbReference type="GO" id="GO:0005576">
    <property type="term" value="C:extracellular region"/>
    <property type="evidence" value="ECO:0007669"/>
    <property type="project" value="UniProtKB-SubCell"/>
</dbReference>
<dbReference type="GO" id="GO:0004040">
    <property type="term" value="F:amidase activity"/>
    <property type="evidence" value="ECO:0007669"/>
    <property type="project" value="InterPro"/>
</dbReference>
<dbReference type="GO" id="GO:0033925">
    <property type="term" value="F:mannosyl-glycoprotein endo-beta-N-acetylglucosaminidase activity"/>
    <property type="evidence" value="ECO:0007669"/>
    <property type="project" value="UniProtKB-EC"/>
</dbReference>
<dbReference type="GO" id="GO:0008745">
    <property type="term" value="F:N-acetylmuramoyl-L-alanine amidase activity"/>
    <property type="evidence" value="ECO:0007669"/>
    <property type="project" value="UniProtKB-EC"/>
</dbReference>
<dbReference type="GO" id="GO:0071555">
    <property type="term" value="P:cell wall organization"/>
    <property type="evidence" value="ECO:0007669"/>
    <property type="project" value="UniProtKB-KW"/>
</dbReference>
<dbReference type="GO" id="GO:0009253">
    <property type="term" value="P:peptidoglycan catabolic process"/>
    <property type="evidence" value="ECO:0007669"/>
    <property type="project" value="InterPro"/>
</dbReference>
<dbReference type="CDD" id="cd06583">
    <property type="entry name" value="PGRP"/>
    <property type="match status" value="1"/>
</dbReference>
<dbReference type="Gene3D" id="1.10.530.10">
    <property type="match status" value="1"/>
</dbReference>
<dbReference type="Gene3D" id="2.30.30.170">
    <property type="match status" value="7"/>
</dbReference>
<dbReference type="Gene3D" id="3.40.80.10">
    <property type="entry name" value="Peptidoglycan recognition protein-like"/>
    <property type="match status" value="1"/>
</dbReference>
<dbReference type="InterPro" id="IPR036505">
    <property type="entry name" value="Amidase/PGRP_sf"/>
</dbReference>
<dbReference type="InterPro" id="IPR002502">
    <property type="entry name" value="Amidase_domain"/>
</dbReference>
<dbReference type="InterPro" id="IPR025987">
    <property type="entry name" value="GW_dom"/>
</dbReference>
<dbReference type="InterPro" id="IPR038200">
    <property type="entry name" value="GW_dom_sf"/>
</dbReference>
<dbReference type="InterPro" id="IPR002901">
    <property type="entry name" value="MGlyc_endo_b_GlcNAc-like_dom"/>
</dbReference>
<dbReference type="Pfam" id="PF01510">
    <property type="entry name" value="Amidase_2"/>
    <property type="match status" value="1"/>
</dbReference>
<dbReference type="Pfam" id="PF01832">
    <property type="entry name" value="Glucosaminidase"/>
    <property type="match status" value="1"/>
</dbReference>
<dbReference type="Pfam" id="PF13457">
    <property type="entry name" value="GW"/>
    <property type="match status" value="6"/>
</dbReference>
<dbReference type="SMART" id="SM00644">
    <property type="entry name" value="Ami_2"/>
    <property type="match status" value="1"/>
</dbReference>
<dbReference type="SMART" id="SM00047">
    <property type="entry name" value="LYZ2"/>
    <property type="match status" value="1"/>
</dbReference>
<dbReference type="SUPFAM" id="SSF55846">
    <property type="entry name" value="N-acetylmuramoyl-L-alanine amidase-like"/>
    <property type="match status" value="1"/>
</dbReference>
<dbReference type="SUPFAM" id="SSF82057">
    <property type="entry name" value="Prokaryotic SH3-related domain"/>
    <property type="match status" value="1"/>
</dbReference>
<dbReference type="PROSITE" id="PS51780">
    <property type="entry name" value="GW"/>
    <property type="match status" value="7"/>
</dbReference>
<name>ATL_STAA1</name>
<organism>
    <name type="scientific">Staphylococcus aureus (strain Mu3 / ATCC 700698)</name>
    <dbReference type="NCBI Taxonomy" id="418127"/>
    <lineage>
        <taxon>Bacteria</taxon>
        <taxon>Bacillati</taxon>
        <taxon>Bacillota</taxon>
        <taxon>Bacilli</taxon>
        <taxon>Bacillales</taxon>
        <taxon>Staphylococcaceae</taxon>
        <taxon>Staphylococcus</taxon>
    </lineage>
</organism>
<proteinExistence type="inferred from homology"/>
<gene>
    <name type="primary">atl</name>
    <name type="synonym">nag</name>
    <name type="ordered locus">SAHV_1045</name>
</gene>
<protein>
    <recommendedName>
        <fullName>Bifunctional autolysin</fullName>
    </recommendedName>
    <domain>
        <recommendedName>
            <fullName>N-acetylmuramoyl-L-alanine amidase</fullName>
            <ecNumber>3.5.1.28</ecNumber>
        </recommendedName>
    </domain>
    <domain>
        <recommendedName>
            <fullName>Mannosyl-glycoprotein endo-beta-N-acetylglucosaminidase</fullName>
            <ecNumber>3.2.1.96</ecNumber>
        </recommendedName>
    </domain>
</protein>
<sequence>MLGVINRMAKKFNYKLPSMVALTLVGSAVTAHQVQAAETTQDQTTNKNVLDSNKVKATTEQAKAEVKNPTQNISGTQVYQDPAIVQPKTANNKTGNAQVSQKVDTAQVNGDTRANQSATTNNTQPVAKSTSTTAPKTNTNVTNAGYSLVDDEDDNSEHQINPELIKSAAKPAALETQYKAAAPKAKTEATPKVTTFSASAQPRSVAATPKTSLPKYKPQVNSSINDYIRKNNLKAPKIEEDYTSYFPKYAYRNGVGRPEGIVVHDTANDRSTINGEISYMKNNYQNAFVHAFVDGDRIIETAPTDYLSWGVGAVGNPRFINVEIVHTHDYASFARSMNNYADYAATQLQYYGLKPDSAEYDGNGTVWTHYAVSKYLGGTDHADPHGYLRSHNYSYDQLYDLINEKYLIKMGKVAPWGTQFTTTPTTPSKPTTPSKPSTGKLTVAANNGVAQIKPTNSGLYTTVYDKTGKATNEVQKTFAVSKTATLGNQKFYLVQDYNSGNKFGWVKEGDVVYNTAKSPVNVNQSYSIKSGTKLYTVPWGTSKQVAGSVSGSGNQTFKASKQQQIDKSIYLYGSVNGKSGWVSKAYLVDTAKPTPTPIPKPSTPTTNNKLTVSSLNGVAQINAKNNGLFTTVYDKTGKPTKEVQKTFAVTKEASLGGNKFYLVKDYNSPTLIGWVKQGDVIYNNAKSPVNVMQTYTVKPGTKLYSVPWGTYKQEAGAVSGTGNQTFKATKQQQIDKSIYLFGTVNGKSGWVSKAYLAVPAAPKKAVAQPKTAVKAYTVTKPQTTQTVSKIAQVKPNNTGIRASVYEKTAKNGAKYADRTFYVTKERAHGNETYVLLNNTSHNIPLGWFNVKDLNVQNLGKEVKTTQKYTVNKSNNGLSMVPWGTKNQVILTGNNIAQGTFNATKQVSVGKDVYLYGTINNRTGWVNAKDLTAPTAVKPTTSAAKDYNYTYVIKNGNGYYYVTPNSDTAKYSLKAFNEQPFAVVKEQVINGQTWYYGKLSNGKLAWIKSTDLAKELIKYNQTGMTLNQVAQIQAGLQYKPQVQRVPGKWTDANFNDVKHAMDTKRLAQDPALKYQFLRLDQPQNISIDKINQFLKGKGVLENQGAAFNKAAQMYGINEVYLISHALLETGNGTSQLAKGADVVNNKVVTNSNTKYHNVFGIAAYDNDPLREGIKYAKQAGWDTVSKAIVGGAKFIGNSYVKAGQNTLYKMRWNPAHPGTHQYATDVDWANINAKIIKGYYDKIGEVGKYFDIPQYK</sequence>
<feature type="signal peptide" evidence="2">
    <location>
        <begin position="1"/>
        <end position="36"/>
    </location>
</feature>
<feature type="chain" id="PRO_0000313013" description="Bifunctional autolysin">
    <location>
        <begin position="37"/>
        <end position="1255"/>
    </location>
</feature>
<feature type="domain" description="GW 1" evidence="3">
    <location>
        <begin position="442"/>
        <end position="516"/>
    </location>
</feature>
<feature type="domain" description="GW 2" evidence="3">
    <location>
        <begin position="518"/>
        <end position="592"/>
    </location>
</feature>
<feature type="domain" description="GW 3" evidence="3">
    <location>
        <begin position="611"/>
        <end position="685"/>
    </location>
</feature>
<feature type="domain" description="GW 4" evidence="3">
    <location>
        <begin position="687"/>
        <end position="761"/>
    </location>
</feature>
<feature type="domain" description="GW 5" evidence="3">
    <location>
        <begin position="783"/>
        <end position="858"/>
    </location>
</feature>
<feature type="domain" description="GW 6" evidence="3">
    <location>
        <begin position="860"/>
        <end position="935"/>
    </location>
</feature>
<feature type="domain" description="GW 7" evidence="3">
    <location>
        <begin position="942"/>
        <end position="1016"/>
    </location>
</feature>
<feature type="region of interest" description="Disordered" evidence="4">
    <location>
        <begin position="110"/>
        <end position="141"/>
    </location>
</feature>
<feature type="region of interest" description="Disordered" evidence="4">
    <location>
        <begin position="193"/>
        <end position="218"/>
    </location>
</feature>
<feature type="region of interest" description="N-acetylmuramoyl-L-alanine amidase">
    <location>
        <begin position="199"/>
        <end position="775"/>
    </location>
</feature>
<feature type="region of interest" description="Endo-beta-N-acetylglucosaminidase">
    <location>
        <begin position="776"/>
        <end position="1255"/>
    </location>
</feature>
<evidence type="ECO:0000250" key="1"/>
<evidence type="ECO:0000255" key="2"/>
<evidence type="ECO:0000255" key="3">
    <source>
        <dbReference type="PROSITE-ProRule" id="PRU01116"/>
    </source>
</evidence>
<evidence type="ECO:0000256" key="4">
    <source>
        <dbReference type="SAM" id="MobiDB-lite"/>
    </source>
</evidence>
<evidence type="ECO:0000305" key="5"/>
<comment type="function">
    <text evidence="1">Endohydrolysis of the di-N-acetylchitobiosyl unit in high-mannose glycopeptides and glycoproteins containing the -[(Man)5(GlcNAc)2]-Asn structure. One N-acetyl-D-glucosamine residue remains attached to the protein; the rest of the oligosaccharide is released intact. Cleaves the peptidoglycan connecting the daughter cells at the end of the cell division cycle, resulting in the separation of the two newly divided cells. Acts as an autolysin in penicillin-induced lysis (By similarity).</text>
</comment>
<comment type="catalytic activity">
    <reaction>
        <text>Hydrolyzes the link between N-acetylmuramoyl residues and L-amino acid residues in certain cell-wall glycopeptides.</text>
        <dbReference type="EC" id="3.5.1.28"/>
    </reaction>
</comment>
<comment type="catalytic activity">
    <reaction>
        <text>an N(4)-(oligosaccharide-(1-&gt;3)-[oligosaccharide-(1-&gt;6)]-beta-D-Man-(1-&gt;4)-beta-D-GlcNAc-(1-&gt;4)-alpha-D-GlcNAc)-L-asparaginyl-[protein] + H2O = an oligosaccharide-(1-&gt;3)-[oligosaccharide-(1-&gt;6)]-beta-D-Man-(1-&gt;4)-D-GlcNAc + N(4)-(N-acetyl-beta-D-glucosaminyl)-L-asparaginyl-[protein]</text>
        <dbReference type="Rhea" id="RHEA:73067"/>
        <dbReference type="Rhea" id="RHEA-COMP:12603"/>
        <dbReference type="Rhea" id="RHEA-COMP:18176"/>
        <dbReference type="ChEBI" id="CHEBI:15377"/>
        <dbReference type="ChEBI" id="CHEBI:132248"/>
        <dbReference type="ChEBI" id="CHEBI:192714"/>
        <dbReference type="ChEBI" id="CHEBI:192715"/>
        <dbReference type="EC" id="3.2.1.96"/>
    </reaction>
</comment>
<comment type="subunit">
    <text evidence="1">Oligomer; forms a ring structure at the cell surface which is important for efficient partitioning of daughter cells after cell division.</text>
</comment>
<comment type="subcellular location">
    <subcellularLocation>
        <location>Secreted</location>
    </subcellularLocation>
    <text evidence="1">Secreted, and then anchored on the cell surface at the peripheral cell wall above the completed septum (septal region), for the next cell division cycle.</text>
</comment>
<comment type="domain">
    <text>The GW domains are responsible for directing the proteins to the septal region.</text>
</comment>
<comment type="PTM">
    <text evidence="1">Undergoes proteolytic processing to generate the two extracellular lytic enzymes, probably at the septal region on the cell surface.</text>
</comment>
<comment type="similarity">
    <text evidence="5">In the N-terminal section; belongs to the N-acetylmuramoyl-L-alanine amidase 2 family.</text>
</comment>
<comment type="similarity">
    <text evidence="5">In the C-terminal section; belongs to the glycosyl hydrolase 73 family.</text>
</comment>
<comment type="sequence caution" evidence="5">
    <conflict type="erroneous initiation">
        <sequence resource="EMBL-CDS" id="BAF77928"/>
    </conflict>
</comment>
<accession>A7X0T9</accession>
<accession>O32391</accession>
<accession>P0C1R4</accession>
<accession>P52081</accession>
<accession>Q7WTC6</accession>
<accession>Q7WY94</accession>
<accession>Q7WY95</accession>